<proteinExistence type="evidence at transcript level"/>
<dbReference type="EMBL" id="AF288607">
    <property type="protein sequence ID" value="AAG00580.1"/>
    <property type="molecule type" value="mRNA"/>
</dbReference>
<dbReference type="SMR" id="Q9GYX2"/>
<dbReference type="GO" id="GO:0005576">
    <property type="term" value="C:extracellular region"/>
    <property type="evidence" value="ECO:0007669"/>
    <property type="project" value="UniProtKB-SubCell"/>
</dbReference>
<dbReference type="GO" id="GO:0019871">
    <property type="term" value="F:sodium channel inhibitor activity"/>
    <property type="evidence" value="ECO:0007669"/>
    <property type="project" value="InterPro"/>
</dbReference>
<dbReference type="GO" id="GO:0090729">
    <property type="term" value="F:toxin activity"/>
    <property type="evidence" value="ECO:0007669"/>
    <property type="project" value="UniProtKB-KW"/>
</dbReference>
<dbReference type="GO" id="GO:0006952">
    <property type="term" value="P:defense response"/>
    <property type="evidence" value="ECO:0007669"/>
    <property type="project" value="InterPro"/>
</dbReference>
<dbReference type="CDD" id="cd23106">
    <property type="entry name" value="neurotoxins_LC_scorpion"/>
    <property type="match status" value="1"/>
</dbReference>
<dbReference type="FunFam" id="3.30.30.10:FF:000002">
    <property type="entry name" value="Alpha-like toxin BmK-M1"/>
    <property type="match status" value="1"/>
</dbReference>
<dbReference type="Gene3D" id="3.30.30.10">
    <property type="entry name" value="Knottin, scorpion toxin-like"/>
    <property type="match status" value="1"/>
</dbReference>
<dbReference type="InterPro" id="IPR044062">
    <property type="entry name" value="LCN-type_CS_alpha_beta_dom"/>
</dbReference>
<dbReference type="InterPro" id="IPR003614">
    <property type="entry name" value="Scorpion_toxin-like"/>
</dbReference>
<dbReference type="InterPro" id="IPR036574">
    <property type="entry name" value="Scorpion_toxin-like_sf"/>
</dbReference>
<dbReference type="InterPro" id="IPR018218">
    <property type="entry name" value="Scorpion_toxinL"/>
</dbReference>
<dbReference type="InterPro" id="IPR002061">
    <property type="entry name" value="Scorpion_toxinL/defensin"/>
</dbReference>
<dbReference type="Pfam" id="PF00537">
    <property type="entry name" value="Toxin_3"/>
    <property type="match status" value="1"/>
</dbReference>
<dbReference type="PRINTS" id="PR00285">
    <property type="entry name" value="SCORPNTOXIN"/>
</dbReference>
<dbReference type="PRINTS" id="PR00284">
    <property type="entry name" value="TOXIN"/>
</dbReference>
<dbReference type="SMART" id="SM00505">
    <property type="entry name" value="Knot1"/>
    <property type="match status" value="1"/>
</dbReference>
<dbReference type="SUPFAM" id="SSF57095">
    <property type="entry name" value="Scorpion toxin-like"/>
    <property type="match status" value="1"/>
</dbReference>
<dbReference type="PROSITE" id="PS51863">
    <property type="entry name" value="LCN_CSAB"/>
    <property type="match status" value="1"/>
</dbReference>
<organism>
    <name type="scientific">Olivierus martensii</name>
    <name type="common">Manchurian scorpion</name>
    <name type="synonym">Mesobuthus martensii</name>
    <dbReference type="NCBI Taxonomy" id="34649"/>
    <lineage>
        <taxon>Eukaryota</taxon>
        <taxon>Metazoa</taxon>
        <taxon>Ecdysozoa</taxon>
        <taxon>Arthropoda</taxon>
        <taxon>Chelicerata</taxon>
        <taxon>Arachnida</taxon>
        <taxon>Scorpiones</taxon>
        <taxon>Buthida</taxon>
        <taxon>Buthoidea</taxon>
        <taxon>Buthidae</taxon>
        <taxon>Olivierus</taxon>
    </lineage>
</organism>
<feature type="signal peptide" evidence="1">
    <location>
        <begin position="1"/>
        <end position="19"/>
    </location>
</feature>
<feature type="chain" id="PRO_0000035255" description="Toxin BmKa1">
    <location>
        <begin position="20"/>
        <end position="85"/>
    </location>
</feature>
<feature type="domain" description="LCN-type CS-alpha/beta" evidence="2">
    <location>
        <begin position="21"/>
        <end position="83"/>
    </location>
</feature>
<feature type="disulfide bond" evidence="2">
    <location>
        <begin position="31"/>
        <end position="82"/>
    </location>
</feature>
<feature type="disulfide bond" evidence="2">
    <location>
        <begin position="35"/>
        <end position="55"/>
    </location>
</feature>
<feature type="disulfide bond" evidence="2">
    <location>
        <begin position="41"/>
        <end position="65"/>
    </location>
</feature>
<feature type="disulfide bond" evidence="2">
    <location>
        <begin position="45"/>
        <end position="67"/>
    </location>
</feature>
<evidence type="ECO:0000250" key="1"/>
<evidence type="ECO:0000255" key="2">
    <source>
        <dbReference type="PROSITE-ProRule" id="PRU01210"/>
    </source>
</evidence>
<evidence type="ECO:0000305" key="3"/>
<comment type="function">
    <text evidence="1">Alpha toxins bind voltage-independently at site-3 of sodium channels (Nav) and inhibit the inactivation of the activated channels, thereby blocking neuronal transmission.</text>
</comment>
<comment type="subcellular location">
    <subcellularLocation>
        <location>Secreted</location>
    </subcellularLocation>
</comment>
<comment type="tissue specificity">
    <text>Expressed by the venom gland.</text>
</comment>
<comment type="domain">
    <text evidence="3">Has the structural arrangement of an alpha-helix connected to antiparallel beta-sheets by disulfide bonds (CS-alpha/beta).</text>
</comment>
<comment type="similarity">
    <text evidence="3">Belongs to the long (4 C-C) scorpion toxin superfamily. Sodium channel inhibitor family. Alpha subfamily.</text>
</comment>
<reference key="1">
    <citation type="journal article" date="2001" name="Toxicon">
        <title>Cloning and characterization of cDNA sequences encoding two novel alpha-like-toxin precursors from the Chinese scorpion Buthus martensii Karsch.</title>
        <authorList>
            <person name="Ye J.-G."/>
            <person name="Chen J."/>
            <person name="Zuo X.-P."/>
            <person name="Ji Y.-H."/>
        </authorList>
    </citation>
    <scope>NUCLEOTIDE SEQUENCE [MRNA]</scope>
    <source>
        <tissue>Venom gland</tissue>
    </source>
</reference>
<accession>Q9GYX2</accession>
<name>SCA1_OLIMR</name>
<keyword id="KW-1015">Disulfide bond</keyword>
<keyword id="KW-0872">Ion channel impairing toxin</keyword>
<keyword id="KW-0528">Neurotoxin</keyword>
<keyword id="KW-0964">Secreted</keyword>
<keyword id="KW-0732">Signal</keyword>
<keyword id="KW-0800">Toxin</keyword>
<keyword id="KW-0738">Voltage-gated sodium channel impairing toxin</keyword>
<sequence length="85" mass="9366">MNYLVFFSLALLLMTGVGSVRDGYIADDKNCPYFCGRNAYCDDECKKNGAESGYCQWAGVYGNACWCYKLPDKVPIRVPGKCNGG</sequence>
<protein>
    <recommendedName>
        <fullName>Toxin BmKa1</fullName>
    </recommendedName>
    <alternativeName>
        <fullName>Alpha-toxin 1</fullName>
    </alternativeName>
    <alternativeName>
        <fullName>BmKalpha1</fullName>
    </alternativeName>
</protein>